<reference key="1">
    <citation type="submission" date="2008-02" db="EMBL/GenBank/DDBJ databases">
        <title>Complete sequence of Escherichia coli C str. ATCC 8739.</title>
        <authorList>
            <person name="Copeland A."/>
            <person name="Lucas S."/>
            <person name="Lapidus A."/>
            <person name="Glavina del Rio T."/>
            <person name="Dalin E."/>
            <person name="Tice H."/>
            <person name="Bruce D."/>
            <person name="Goodwin L."/>
            <person name="Pitluck S."/>
            <person name="Kiss H."/>
            <person name="Brettin T."/>
            <person name="Detter J.C."/>
            <person name="Han C."/>
            <person name="Kuske C.R."/>
            <person name="Schmutz J."/>
            <person name="Larimer F."/>
            <person name="Land M."/>
            <person name="Hauser L."/>
            <person name="Kyrpides N."/>
            <person name="Mikhailova N."/>
            <person name="Ingram L."/>
            <person name="Richardson P."/>
        </authorList>
    </citation>
    <scope>NUCLEOTIDE SEQUENCE [LARGE SCALE GENOMIC DNA]</scope>
    <source>
        <strain>ATCC 8739 / DSM 1576 / NBRC 3972 / NCIMB 8545 / WDCM 00012 / Crooks</strain>
    </source>
</reference>
<feature type="chain" id="PRO_0000343959" description="Cell division inhibitor SulA">
    <location>
        <begin position="1"/>
        <end position="169"/>
    </location>
</feature>
<feature type="region of interest" description="FtsZ binding" evidence="1">
    <location>
        <begin position="106"/>
        <end position="112"/>
    </location>
</feature>
<feature type="region of interest" description="Lon protease binding" evidence="1">
    <location>
        <begin position="162"/>
        <end position="169"/>
    </location>
</feature>
<feature type="site" description="Essential for degradation by Lon protease" evidence="1">
    <location>
        <position position="169"/>
    </location>
</feature>
<dbReference type="EMBL" id="CP000946">
    <property type="protein sequence ID" value="ACA78268.1"/>
    <property type="molecule type" value="Genomic_DNA"/>
</dbReference>
<dbReference type="RefSeq" id="WP_000288710.1">
    <property type="nucleotide sequence ID" value="NZ_MTFT01000009.1"/>
</dbReference>
<dbReference type="SMR" id="B1IVX4"/>
<dbReference type="GeneID" id="93776456"/>
<dbReference type="KEGG" id="ecl:EcolC_2638"/>
<dbReference type="HOGENOM" id="CLU_118972_1_0_6"/>
<dbReference type="GO" id="GO:0000917">
    <property type="term" value="P:division septum assembly"/>
    <property type="evidence" value="ECO:0007669"/>
    <property type="project" value="UniProtKB-KW"/>
</dbReference>
<dbReference type="GO" id="GO:0006281">
    <property type="term" value="P:DNA repair"/>
    <property type="evidence" value="ECO:0007669"/>
    <property type="project" value="TreeGrafter"/>
</dbReference>
<dbReference type="GO" id="GO:0051782">
    <property type="term" value="P:negative regulation of cell division"/>
    <property type="evidence" value="ECO:0007669"/>
    <property type="project" value="UniProtKB-UniRule"/>
</dbReference>
<dbReference type="GO" id="GO:0009432">
    <property type="term" value="P:SOS response"/>
    <property type="evidence" value="ECO:0007669"/>
    <property type="project" value="UniProtKB-UniRule"/>
</dbReference>
<dbReference type="FunFam" id="3.40.50.300:FF:000417">
    <property type="entry name" value="Cell division inhibitor SulA"/>
    <property type="match status" value="1"/>
</dbReference>
<dbReference type="Gene3D" id="3.40.50.300">
    <property type="entry name" value="P-loop containing nucleotide triphosphate hydrolases"/>
    <property type="match status" value="1"/>
</dbReference>
<dbReference type="HAMAP" id="MF_01179">
    <property type="entry name" value="SulA"/>
    <property type="match status" value="1"/>
</dbReference>
<dbReference type="InterPro" id="IPR004596">
    <property type="entry name" value="Cell_div_suppressor_SulA"/>
</dbReference>
<dbReference type="InterPro" id="IPR027417">
    <property type="entry name" value="P-loop_NTPase"/>
</dbReference>
<dbReference type="InterPro" id="IPR050356">
    <property type="entry name" value="SulA_CellDiv_inhibitor"/>
</dbReference>
<dbReference type="InterPro" id="IPR047696">
    <property type="entry name" value="SulA_enterobact"/>
</dbReference>
<dbReference type="NCBIfam" id="NF007892">
    <property type="entry name" value="PRK10595.1"/>
    <property type="match status" value="1"/>
</dbReference>
<dbReference type="NCBIfam" id="TIGR00623">
    <property type="entry name" value="SOS_SulA_coli"/>
    <property type="match status" value="1"/>
</dbReference>
<dbReference type="PANTHER" id="PTHR35369">
    <property type="entry name" value="BLR3025 PROTEIN-RELATED"/>
    <property type="match status" value="1"/>
</dbReference>
<dbReference type="PANTHER" id="PTHR35369:SF4">
    <property type="entry name" value="CELL DIVISION INHIBITOR SULA"/>
    <property type="match status" value="1"/>
</dbReference>
<dbReference type="Pfam" id="PF03846">
    <property type="entry name" value="SulA"/>
    <property type="match status" value="1"/>
</dbReference>
<dbReference type="PIRSF" id="PIRSF003093">
    <property type="entry name" value="SulA"/>
    <property type="match status" value="1"/>
</dbReference>
<dbReference type="SUPFAM" id="SSF52540">
    <property type="entry name" value="P-loop containing nucleoside triphosphate hydrolases"/>
    <property type="match status" value="1"/>
</dbReference>
<sequence length="169" mass="18801">MYTSGYAHRSSSFSSAASKIARVSTENTTAGLISEVVYREDQPMMTQLLLLPLLQQLGQQSRWQLWLTPQQKLSREWVQASGLPLTKVMQISQLSPCHTVESMVRALRTGNYSVVIGWLADDLTEEEHAELVDAANEGNAMGFIMRPVSASSHATRQLSGLKIHSNLYH</sequence>
<organism>
    <name type="scientific">Escherichia coli (strain ATCC 8739 / DSM 1576 / NBRC 3972 / NCIMB 8545 / WDCM 00012 / Crooks)</name>
    <dbReference type="NCBI Taxonomy" id="481805"/>
    <lineage>
        <taxon>Bacteria</taxon>
        <taxon>Pseudomonadati</taxon>
        <taxon>Pseudomonadota</taxon>
        <taxon>Gammaproteobacteria</taxon>
        <taxon>Enterobacterales</taxon>
        <taxon>Enterobacteriaceae</taxon>
        <taxon>Escherichia</taxon>
    </lineage>
</organism>
<comment type="function">
    <text evidence="1">Component of the SOS system and an inhibitor of cell division. Accumulation of SulA causes rapid cessation of cell division and the appearance of long, non-septate filaments. In the presence of GTP, binds a polymerization-competent form of FtsZ in a 1:1 ratio, thus inhibiting FtsZ polymerization and therefore preventing it from participating in the assembly of the Z ring. This mechanism prevents the premature segregation of damaged DNA to daughter cells during cell division.</text>
</comment>
<comment type="subunit">
    <text evidence="1">Interacts with FtsZ.</text>
</comment>
<comment type="induction">
    <text evidence="1">By DNA damage, as part of the SOS response.</text>
</comment>
<comment type="PTM">
    <text evidence="1">Is rapidly cleaved and degraded by the Lon protease once DNA damage is repaired.</text>
</comment>
<comment type="similarity">
    <text evidence="1">Belongs to the SulA family.</text>
</comment>
<keyword id="KW-0131">Cell cycle</keyword>
<keyword id="KW-0132">Cell division</keyword>
<keyword id="KW-0227">DNA damage</keyword>
<keyword id="KW-0717">Septation</keyword>
<keyword id="KW-0742">SOS response</keyword>
<accession>B1IVX4</accession>
<protein>
    <recommendedName>
        <fullName evidence="1">Cell division inhibitor SulA</fullName>
    </recommendedName>
</protein>
<proteinExistence type="inferred from homology"/>
<name>SULA_ECOLC</name>
<gene>
    <name evidence="1" type="primary">sulA</name>
    <name type="ordered locus">EcolC_2638</name>
</gene>
<evidence type="ECO:0000255" key="1">
    <source>
        <dbReference type="HAMAP-Rule" id="MF_01179"/>
    </source>
</evidence>